<feature type="chain" id="PRO_0000272910" description="Large ribosomal subunit protein uL23cz/uL23cy">
    <location>
        <begin position="1"/>
        <end position="93"/>
    </location>
</feature>
<dbReference type="EMBL" id="AB237912">
    <property type="protein sequence ID" value="BAE46697.1"/>
    <property type="molecule type" value="Genomic_DNA"/>
</dbReference>
<dbReference type="EMBL" id="AB237912">
    <property type="protein sequence ID" value="BAE46734.1"/>
    <property type="molecule type" value="Genomic_DNA"/>
</dbReference>
<dbReference type="SMR" id="Q3C1N5"/>
<dbReference type="KEGG" id="nsy:3735084"/>
<dbReference type="KEGG" id="nsy:3735085"/>
<dbReference type="OrthoDB" id="17552at4085"/>
<dbReference type="Proteomes" id="UP000189701">
    <property type="component" value="Unplaced"/>
</dbReference>
<dbReference type="GO" id="GO:0009507">
    <property type="term" value="C:chloroplast"/>
    <property type="evidence" value="ECO:0007669"/>
    <property type="project" value="UniProtKB-SubCell"/>
</dbReference>
<dbReference type="GO" id="GO:1990904">
    <property type="term" value="C:ribonucleoprotein complex"/>
    <property type="evidence" value="ECO:0007669"/>
    <property type="project" value="UniProtKB-KW"/>
</dbReference>
<dbReference type="GO" id="GO:0005840">
    <property type="term" value="C:ribosome"/>
    <property type="evidence" value="ECO:0007669"/>
    <property type="project" value="UniProtKB-KW"/>
</dbReference>
<dbReference type="GO" id="GO:0003729">
    <property type="term" value="F:mRNA binding"/>
    <property type="evidence" value="ECO:0007669"/>
    <property type="project" value="UniProtKB-ARBA"/>
</dbReference>
<dbReference type="GO" id="GO:0019843">
    <property type="term" value="F:rRNA binding"/>
    <property type="evidence" value="ECO:0007669"/>
    <property type="project" value="UniProtKB-UniRule"/>
</dbReference>
<dbReference type="GO" id="GO:0003735">
    <property type="term" value="F:structural constituent of ribosome"/>
    <property type="evidence" value="ECO:0007669"/>
    <property type="project" value="InterPro"/>
</dbReference>
<dbReference type="GO" id="GO:0006412">
    <property type="term" value="P:translation"/>
    <property type="evidence" value="ECO:0007669"/>
    <property type="project" value="UniProtKB-UniRule"/>
</dbReference>
<dbReference type="FunFam" id="3.30.70.330:FF:000002">
    <property type="entry name" value="50S ribosomal protein L23, chloroplastic"/>
    <property type="match status" value="1"/>
</dbReference>
<dbReference type="Gene3D" id="3.30.70.330">
    <property type="match status" value="1"/>
</dbReference>
<dbReference type="HAMAP" id="MF_01369_B">
    <property type="entry name" value="Ribosomal_uL23_B"/>
    <property type="match status" value="1"/>
</dbReference>
<dbReference type="InterPro" id="IPR012677">
    <property type="entry name" value="Nucleotide-bd_a/b_plait_sf"/>
</dbReference>
<dbReference type="InterPro" id="IPR013025">
    <property type="entry name" value="Ribosomal_uL23-like"/>
</dbReference>
<dbReference type="InterPro" id="IPR012678">
    <property type="entry name" value="Ribosomal_uL23/eL15/eS24_sf"/>
</dbReference>
<dbReference type="InterPro" id="IPR001014">
    <property type="entry name" value="Ribosomal_uL23_CS"/>
</dbReference>
<dbReference type="PANTHER" id="PTHR11620">
    <property type="entry name" value="60S RIBOSOMAL PROTEIN L23A"/>
    <property type="match status" value="1"/>
</dbReference>
<dbReference type="Pfam" id="PF00276">
    <property type="entry name" value="Ribosomal_L23"/>
    <property type="match status" value="1"/>
</dbReference>
<dbReference type="SUPFAM" id="SSF54189">
    <property type="entry name" value="Ribosomal proteins S24e, L23 and L15e"/>
    <property type="match status" value="1"/>
</dbReference>
<dbReference type="PROSITE" id="PS00050">
    <property type="entry name" value="RIBOSOMAL_L23"/>
    <property type="match status" value="1"/>
</dbReference>
<organism>
    <name type="scientific">Nicotiana sylvestris</name>
    <name type="common">Wood tobacco</name>
    <name type="synonym">South American tobacco</name>
    <dbReference type="NCBI Taxonomy" id="4096"/>
    <lineage>
        <taxon>Eukaryota</taxon>
        <taxon>Viridiplantae</taxon>
        <taxon>Streptophyta</taxon>
        <taxon>Embryophyta</taxon>
        <taxon>Tracheophyta</taxon>
        <taxon>Spermatophyta</taxon>
        <taxon>Magnoliopsida</taxon>
        <taxon>eudicotyledons</taxon>
        <taxon>Gunneridae</taxon>
        <taxon>Pentapetalae</taxon>
        <taxon>asterids</taxon>
        <taxon>lamiids</taxon>
        <taxon>Solanales</taxon>
        <taxon>Solanaceae</taxon>
        <taxon>Nicotianoideae</taxon>
        <taxon>Nicotianeae</taxon>
        <taxon>Nicotiana</taxon>
    </lineage>
</organism>
<protein>
    <recommendedName>
        <fullName evidence="2">Large ribosomal subunit protein uL23cz/uL23cy</fullName>
    </recommendedName>
    <alternativeName>
        <fullName>50S ribosomal protein L23, chloroplastic</fullName>
    </alternativeName>
</protein>
<geneLocation type="chloroplast"/>
<sequence length="93" mass="10763">MDGIKYAVFTDKSIRLLGKNQYTSNVESGSTRTEIKHWVELFFGVKVIAMNSHRLPGKSRRMGPIMGHTMHYRRMIITLQPGYSIPPLRKKRT</sequence>
<comment type="function">
    <text evidence="1">Binds to 23S rRNA.</text>
</comment>
<comment type="subunit">
    <text evidence="1">Part of the 50S ribosomal subunit.</text>
</comment>
<comment type="subcellular location">
    <subcellularLocation>
        <location>Plastid</location>
        <location>Chloroplast</location>
    </subcellularLocation>
</comment>
<comment type="similarity">
    <text evidence="2">Belongs to the universal ribosomal protein uL23 family.</text>
</comment>
<name>RK23_NICSY</name>
<reference key="1">
    <citation type="journal article" date="2006" name="Mol. Genet. Genomics">
        <title>The chloroplast genome of Nicotiana sylvestris and Nicotiana tomentosiformis: complete sequencing confirms that the Nicotiana sylvestris progenitor is the maternal genome donor of Nicotiana tabacum.</title>
        <authorList>
            <person name="Yukawa M."/>
            <person name="Tsudzuki T."/>
            <person name="Sugiura M."/>
        </authorList>
    </citation>
    <scope>NUCLEOTIDE SEQUENCE [LARGE SCALE GENOMIC DNA]</scope>
</reference>
<proteinExistence type="inferred from homology"/>
<evidence type="ECO:0000250" key="1"/>
<evidence type="ECO:0000305" key="2"/>
<accession>Q3C1N5</accession>
<gene>
    <name type="primary">rpl23-A</name>
</gene>
<gene>
    <name type="primary">rpl23-B</name>
</gene>
<keyword id="KW-0150">Chloroplast</keyword>
<keyword id="KW-0934">Plastid</keyword>
<keyword id="KW-1185">Reference proteome</keyword>
<keyword id="KW-0687">Ribonucleoprotein</keyword>
<keyword id="KW-0689">Ribosomal protein</keyword>
<keyword id="KW-0694">RNA-binding</keyword>
<keyword id="KW-0699">rRNA-binding</keyword>